<proteinExistence type="inferred from homology"/>
<organism>
    <name type="scientific">Haemadipsa sylvestris</name>
    <name type="common">Indian leech</name>
    <dbReference type="NCBI Taxonomy" id="13555"/>
    <lineage>
        <taxon>Eukaryota</taxon>
        <taxon>Metazoa</taxon>
        <taxon>Spiralia</taxon>
        <taxon>Lophotrochozoa</taxon>
        <taxon>Annelida</taxon>
        <taxon>Clitellata</taxon>
        <taxon>Hirudinea</taxon>
        <taxon>Hirudinida</taxon>
        <taxon>Hirudiniformes</taxon>
        <taxon>Haemadipsidae</taxon>
        <taxon>Haemadipsa</taxon>
    </lineage>
</organism>
<evidence type="ECO:0000250" key="1">
    <source>
        <dbReference type="UniProtKB" id="A0A2L1DGG0"/>
    </source>
</evidence>
<evidence type="ECO:0000255" key="2"/>
<evidence type="ECO:0000303" key="3">
    <source>
    </source>
</evidence>
<evidence type="ECO:0000305" key="4"/>
<accession>P0DUH0</accession>
<feature type="signal peptide" evidence="2">
    <location>
        <begin position="1"/>
        <end position="21"/>
    </location>
</feature>
<feature type="propeptide" id="PRO_0000452226" evidence="1">
    <location>
        <begin position="22"/>
        <end position="27"/>
    </location>
</feature>
<feature type="peptide" id="PRO_0000452227" description="Peptide HSTX-VII" evidence="1">
    <location>
        <begin position="25"/>
        <end position="47"/>
    </location>
</feature>
<feature type="modified residue" description="Isoleucine amide" evidence="1">
    <location>
        <position position="47"/>
    </location>
</feature>
<feature type="disulfide bond" evidence="1">
    <location>
        <begin position="26"/>
        <end position="38"/>
    </location>
</feature>
<feature type="disulfide bond" evidence="1">
    <location>
        <begin position="32"/>
        <end position="43"/>
    </location>
</feature>
<name>HSTX7_HAESL</name>
<protein>
    <recommendedName>
        <fullName evidence="3">Peptide HSTX-VII</fullName>
    </recommendedName>
</protein>
<reference key="1">
    <citation type="journal article" date="2018" name="Front. Pharmacol.">
        <title>Novel sodium channel inhibitor from leeches.</title>
        <authorList>
            <person name="Wang G."/>
            <person name="Long C."/>
            <person name="Liu W."/>
            <person name="Xu C."/>
            <person name="Zhang M."/>
            <person name="Li Q."/>
            <person name="Lu Q."/>
            <person name="Meng P."/>
            <person name="Li D."/>
            <person name="Rong M."/>
            <person name="Sun Z."/>
            <person name="Luo X."/>
            <person name="Lai R."/>
        </authorList>
    </citation>
    <scope>NUCLEOTIDE SEQUENCE [MRNA]</scope>
    <source>
        <tissue>Salivary gland</tissue>
    </source>
</reference>
<keyword id="KW-0027">Amidation</keyword>
<keyword id="KW-1015">Disulfide bond</keyword>
<keyword id="KW-0964">Secreted</keyword>
<keyword id="KW-0732">Signal</keyword>
<dbReference type="GO" id="GO:0005576">
    <property type="term" value="C:extracellular region"/>
    <property type="evidence" value="ECO:0007669"/>
    <property type="project" value="UniProtKB-SubCell"/>
</dbReference>
<sequence>MRTLLVFLLLAILVAVLIGNVQVEACKEVDECGDMFVCIEGICEPLIG</sequence>
<comment type="function">
    <text evidence="1">Leech salivary gland peptide with unknown function.</text>
</comment>
<comment type="subcellular location">
    <subcellularLocation>
        <location evidence="1">Secreted</location>
    </subcellularLocation>
</comment>
<comment type="tissue specificity">
    <text evidence="1">Expressed in salivary glands. Highly expressed in the head, body and tail with a 2-3-fold higher expression in the head.</text>
</comment>
<comment type="miscellaneous">
    <text evidence="1">Does not show effect on voltage-gated calcium channels, potassium channels, and tetrodotoxin-sensitive sodium channels. Does not show activity on Nav1.7/SCN9A, and shows very weak activity on cation channel TRPA1.</text>
</comment>
<comment type="similarity">
    <text evidence="4">Belongs to the annelide toxin family.</text>
</comment>